<comment type="subunit">
    <text evidence="2">Component of the mitochondrial ribosome large subunit (39S) which comprises a 16S rRNA and about 50 distinct proteins.</text>
</comment>
<comment type="subcellular location">
    <subcellularLocation>
        <location evidence="2 3 4">Mitochondrion</location>
    </subcellularLocation>
</comment>
<comment type="similarity">
    <text evidence="5">Belongs to the universal ribosomal protein uL2 family.</text>
</comment>
<comment type="sequence caution" evidence="5">
    <conflict type="erroneous termination">
        <sequence resource="EMBL" id="BC111173"/>
    </conflict>
    <text>Truncated C-terminus.</text>
</comment>
<accession>Q2TA12</accession>
<feature type="transit peptide" description="Mitochondrion" evidence="1">
    <location>
        <begin position="1"/>
        <end position="60"/>
    </location>
</feature>
<feature type="chain" id="PRO_0000261639" description="Large ribosomal subunit protein uL2m">
    <location>
        <begin position="61"/>
        <end position="306"/>
    </location>
</feature>
<reference key="1">
    <citation type="submission" date="2005-12" db="EMBL/GenBank/DDBJ databases">
        <authorList>
            <consortium name="NIH - Mammalian Gene Collection (MGC) project"/>
        </authorList>
    </citation>
    <scope>NUCLEOTIDE SEQUENCE [LARGE SCALE MRNA]</scope>
    <source>
        <strain>Crossbred X Angus</strain>
        <tissue>Liver</tissue>
    </source>
</reference>
<reference key="2">
    <citation type="journal article" date="2001" name="J. Biol. Chem.">
        <title>Structural compensation for the deficit of rRNA with proteins in the mammalian mitochondrial ribosome. Systematic analysis of protein components of the large ribosomal subunit from mammalian mitochondria.</title>
        <authorList>
            <person name="Suzuki T."/>
            <person name="Terasaki M."/>
            <person name="Takemoto-Hori C."/>
            <person name="Hanada T."/>
            <person name="Ueda T."/>
            <person name="Wada A."/>
            <person name="Watanabe K."/>
        </authorList>
    </citation>
    <scope>IDENTIFICATION BY MASS SPECTROMETRY</scope>
    <scope>SUBCELLULAR LOCATION</scope>
    <scope>SUBUNIT</scope>
</reference>
<reference key="3">
    <citation type="journal article" date="2001" name="J. Biol. Chem.">
        <title>The large subunit of the mammalian mitochondrial ribosome. Analysis of the complement of ribosomal proteins present.</title>
        <authorList>
            <person name="Koc E.C."/>
            <person name="Burkhart W."/>
            <person name="Blackburn K."/>
            <person name="Moyer M.B."/>
            <person name="Schlatzer D.M."/>
            <person name="Moseley A."/>
            <person name="Spremulli L.L."/>
        </authorList>
    </citation>
    <scope>IDENTIFICATION BY MASS SPECTROMETRY</scope>
    <scope>SUBCELLULAR LOCATION</scope>
</reference>
<reference key="4">
    <citation type="journal article" date="2006" name="J. Mol. Biol.">
        <title>A structural model for the large subunit of the mammalian mitochondrial ribosome.</title>
        <authorList>
            <person name="Mears J.A."/>
            <person name="Sharma M.R."/>
            <person name="Gutell R.R."/>
            <person name="McCook A.S."/>
            <person name="Richardson P.E."/>
            <person name="Caulfield T.R."/>
            <person name="Agrawal R.K."/>
            <person name="Harvey S.C."/>
        </authorList>
    </citation>
    <scope>STRUCTURE BY ELECTRON MICROSCOPY (12 ANGSTROMS)</scope>
    <scope>SUBCELLULAR LOCATION</scope>
</reference>
<sequence>MALRVVTRALGSLSLTPRIAAVPGPSLLPAAQVTNNVLLQLPSASMLLPSRPLLTSVALSAKFVSWKSRTKYTTMPVKMRKSGGRNHTGRIQVHGIGGGHKQRYRMIDFLRFRPEQESKPGPFEEKVIVVRYDPCRSADIALVAGGNRKRWIIATENMKAGDTILNSDHIGRMAVAAREGDAHPLGALPVGTLINNVESEPGRGAQYIRAAGTCGVLLRKVNGTAIIQLPSKRQMQVLETCTATVGRVSNVDHNKRVIGKAGRNRWLGKRPNSGRWHRKGGWAGRKIRPLPPMKSYVKLPSAAAQN</sequence>
<evidence type="ECO:0000255" key="1"/>
<evidence type="ECO:0000269" key="2">
    <source>
    </source>
</evidence>
<evidence type="ECO:0000269" key="3">
    <source>
    </source>
</evidence>
<evidence type="ECO:0000269" key="4">
    <source>
    </source>
</evidence>
<evidence type="ECO:0000305" key="5"/>
<proteinExistence type="evidence at protein level"/>
<organism>
    <name type="scientific">Bos taurus</name>
    <name type="common">Bovine</name>
    <dbReference type="NCBI Taxonomy" id="9913"/>
    <lineage>
        <taxon>Eukaryota</taxon>
        <taxon>Metazoa</taxon>
        <taxon>Chordata</taxon>
        <taxon>Craniata</taxon>
        <taxon>Vertebrata</taxon>
        <taxon>Euteleostomi</taxon>
        <taxon>Mammalia</taxon>
        <taxon>Eutheria</taxon>
        <taxon>Laurasiatheria</taxon>
        <taxon>Artiodactyla</taxon>
        <taxon>Ruminantia</taxon>
        <taxon>Pecora</taxon>
        <taxon>Bovidae</taxon>
        <taxon>Bovinae</taxon>
        <taxon>Bos</taxon>
    </lineage>
</organism>
<keyword id="KW-0002">3D-structure</keyword>
<keyword id="KW-0496">Mitochondrion</keyword>
<keyword id="KW-1185">Reference proteome</keyword>
<keyword id="KW-0687">Ribonucleoprotein</keyword>
<keyword id="KW-0689">Ribosomal protein</keyword>
<keyword id="KW-0809">Transit peptide</keyword>
<gene>
    <name type="primary">MRPL2</name>
</gene>
<name>RM02_BOVIN</name>
<dbReference type="EMBL" id="BC111173">
    <property type="status" value="NOT_ANNOTATED_CDS"/>
    <property type="molecule type" value="mRNA"/>
</dbReference>
<dbReference type="RefSeq" id="NP_001035617.2">
    <property type="nucleotide sequence ID" value="NM_001040527.3"/>
</dbReference>
<dbReference type="PDB" id="2FTC">
    <property type="method" value="EM"/>
    <property type="chains" value="B=127-262"/>
</dbReference>
<dbReference type="PDB" id="3IY9">
    <property type="method" value="EM"/>
    <property type="resolution" value="14.10 A"/>
    <property type="chains" value="B=127-262"/>
</dbReference>
<dbReference type="PDBsum" id="2FTC"/>
<dbReference type="PDBsum" id="3IY9"/>
<dbReference type="SMR" id="Q2TA12"/>
<dbReference type="FunCoup" id="Q2TA12">
    <property type="interactions" value="1389"/>
</dbReference>
<dbReference type="IntAct" id="Q2TA12">
    <property type="interactions" value="1"/>
</dbReference>
<dbReference type="STRING" id="9913.ENSBTAP00000016951"/>
<dbReference type="iPTMnet" id="Q2TA12"/>
<dbReference type="PaxDb" id="9913-ENSBTAP00000016951"/>
<dbReference type="Ensembl" id="ENSBTAT00000016951.5">
    <property type="protein sequence ID" value="ENSBTAP00000016951.4"/>
    <property type="gene ID" value="ENSBTAG00000012752.7"/>
</dbReference>
<dbReference type="GeneID" id="514403"/>
<dbReference type="KEGG" id="bta:514403"/>
<dbReference type="CTD" id="51069"/>
<dbReference type="VEuPathDB" id="HostDB:ENSBTAG00000012752"/>
<dbReference type="VGNC" id="VGNC:31623">
    <property type="gene designation" value="MRPL2"/>
</dbReference>
<dbReference type="eggNOG" id="KOG0438">
    <property type="taxonomic scope" value="Eukaryota"/>
</dbReference>
<dbReference type="GeneTree" id="ENSGT00940000153244"/>
<dbReference type="HOGENOM" id="CLU_036235_1_2_1"/>
<dbReference type="InParanoid" id="Q2TA12"/>
<dbReference type="OMA" id="EHNKEHV"/>
<dbReference type="OrthoDB" id="268576at2759"/>
<dbReference type="TreeFam" id="TF314647"/>
<dbReference type="Reactome" id="R-BTA-5389840">
    <property type="pathway name" value="Mitochondrial translation elongation"/>
</dbReference>
<dbReference type="Reactome" id="R-BTA-5419276">
    <property type="pathway name" value="Mitochondrial translation termination"/>
</dbReference>
<dbReference type="EvolutionaryTrace" id="Q2TA12"/>
<dbReference type="Proteomes" id="UP000009136">
    <property type="component" value="Chromosome 23"/>
</dbReference>
<dbReference type="Bgee" id="ENSBTAG00000012752">
    <property type="expression patterns" value="Expressed in tongue muscle and 106 other cell types or tissues"/>
</dbReference>
<dbReference type="GO" id="GO:0005743">
    <property type="term" value="C:mitochondrial inner membrane"/>
    <property type="evidence" value="ECO:0000304"/>
    <property type="project" value="Reactome"/>
</dbReference>
<dbReference type="GO" id="GO:0005762">
    <property type="term" value="C:mitochondrial large ribosomal subunit"/>
    <property type="evidence" value="ECO:0000250"/>
    <property type="project" value="UniProtKB"/>
</dbReference>
<dbReference type="GO" id="GO:0005654">
    <property type="term" value="C:nucleoplasm"/>
    <property type="evidence" value="ECO:0007669"/>
    <property type="project" value="Ensembl"/>
</dbReference>
<dbReference type="GO" id="GO:0003723">
    <property type="term" value="F:RNA binding"/>
    <property type="evidence" value="ECO:0000318"/>
    <property type="project" value="GO_Central"/>
</dbReference>
<dbReference type="GO" id="GO:0003735">
    <property type="term" value="F:structural constituent of ribosome"/>
    <property type="evidence" value="ECO:0000318"/>
    <property type="project" value="GO_Central"/>
</dbReference>
<dbReference type="GO" id="GO:0032543">
    <property type="term" value="P:mitochondrial translation"/>
    <property type="evidence" value="ECO:0000318"/>
    <property type="project" value="GO_Central"/>
</dbReference>
<dbReference type="FunFam" id="2.30.30.30:FF:000025">
    <property type="entry name" value="39S ribosomal protein L2, mitochondrial"/>
    <property type="match status" value="1"/>
</dbReference>
<dbReference type="FunFam" id="2.40.50.140:FF:000157">
    <property type="entry name" value="39S ribosomal protein L2, mitochondrial"/>
    <property type="match status" value="1"/>
</dbReference>
<dbReference type="Gene3D" id="2.30.30.30">
    <property type="match status" value="1"/>
</dbReference>
<dbReference type="Gene3D" id="2.40.50.140">
    <property type="entry name" value="Nucleic acid-binding proteins"/>
    <property type="match status" value="1"/>
</dbReference>
<dbReference type="InterPro" id="IPR012340">
    <property type="entry name" value="NA-bd_OB-fold"/>
</dbReference>
<dbReference type="InterPro" id="IPR014722">
    <property type="entry name" value="Rib_uL2_dom2"/>
</dbReference>
<dbReference type="InterPro" id="IPR002171">
    <property type="entry name" value="Ribosomal_uL2"/>
</dbReference>
<dbReference type="InterPro" id="IPR022669">
    <property type="entry name" value="Ribosomal_uL2_C"/>
</dbReference>
<dbReference type="InterPro" id="IPR022666">
    <property type="entry name" value="Ribosomal_uL2_RNA-bd_dom"/>
</dbReference>
<dbReference type="InterPro" id="IPR008991">
    <property type="entry name" value="Translation_prot_SH3-like_sf"/>
</dbReference>
<dbReference type="PANTHER" id="PTHR13691:SF73">
    <property type="entry name" value="LARGE RIBOSOMAL SUBUNIT PROTEIN UL2M"/>
    <property type="match status" value="1"/>
</dbReference>
<dbReference type="PANTHER" id="PTHR13691">
    <property type="entry name" value="RIBOSOMAL PROTEIN L2"/>
    <property type="match status" value="1"/>
</dbReference>
<dbReference type="Pfam" id="PF00181">
    <property type="entry name" value="Ribosomal_L2"/>
    <property type="match status" value="1"/>
</dbReference>
<dbReference type="Pfam" id="PF03947">
    <property type="entry name" value="Ribosomal_L2_C"/>
    <property type="match status" value="1"/>
</dbReference>
<dbReference type="SMART" id="SM01383">
    <property type="entry name" value="Ribosomal_L2"/>
    <property type="match status" value="1"/>
</dbReference>
<dbReference type="SMART" id="SM01382">
    <property type="entry name" value="Ribosomal_L2_C"/>
    <property type="match status" value="1"/>
</dbReference>
<dbReference type="SUPFAM" id="SSF50249">
    <property type="entry name" value="Nucleic acid-binding proteins"/>
    <property type="match status" value="1"/>
</dbReference>
<dbReference type="SUPFAM" id="SSF50104">
    <property type="entry name" value="Translation proteins SH3-like domain"/>
    <property type="match status" value="1"/>
</dbReference>
<protein>
    <recommendedName>
        <fullName evidence="5">Large ribosomal subunit protein uL2m</fullName>
    </recommendedName>
    <alternativeName>
        <fullName>39S ribosomal protein L2, mitochondrial</fullName>
        <shortName>L2mt</shortName>
        <shortName>MRP-L2</shortName>
    </alternativeName>
</protein>